<reference key="1">
    <citation type="submission" date="2007-07" db="EMBL/GenBank/DDBJ databases">
        <title>Complete genome sequence of Campylobacter hominis ATCC BAA-381, a commensal isolated from the human gastrointestinal tract.</title>
        <authorList>
            <person name="Fouts D.E."/>
            <person name="Mongodin E.F."/>
            <person name="Puiu D."/>
            <person name="Sebastian Y."/>
            <person name="Miller W.G."/>
            <person name="Mandrell R.E."/>
            <person name="Nelson K.E."/>
        </authorList>
    </citation>
    <scope>NUCLEOTIDE SEQUENCE [LARGE SCALE GENOMIC DNA]</scope>
    <source>
        <strain>ATCC BAA-381 / DSM 21671 / CCUG 45161 / LMG 19568 / NCTC 13146 / CH001A</strain>
    </source>
</reference>
<gene>
    <name evidence="1" type="primary">pyrE</name>
    <name type="ordered locus">CHAB381_0211</name>
</gene>
<proteinExistence type="inferred from homology"/>
<comment type="function">
    <text evidence="1">Catalyzes the transfer of a ribosyl phosphate group from 5-phosphoribose 1-diphosphate to orotate, leading to the formation of orotidine monophosphate (OMP).</text>
</comment>
<comment type="catalytic activity">
    <reaction evidence="1">
        <text>orotidine 5'-phosphate + diphosphate = orotate + 5-phospho-alpha-D-ribose 1-diphosphate</text>
        <dbReference type="Rhea" id="RHEA:10380"/>
        <dbReference type="ChEBI" id="CHEBI:30839"/>
        <dbReference type="ChEBI" id="CHEBI:33019"/>
        <dbReference type="ChEBI" id="CHEBI:57538"/>
        <dbReference type="ChEBI" id="CHEBI:58017"/>
        <dbReference type="EC" id="2.4.2.10"/>
    </reaction>
</comment>
<comment type="cofactor">
    <cofactor evidence="1">
        <name>Mg(2+)</name>
        <dbReference type="ChEBI" id="CHEBI:18420"/>
    </cofactor>
</comment>
<comment type="pathway">
    <text evidence="1">Pyrimidine metabolism; UMP biosynthesis via de novo pathway; UMP from orotate: step 1/2.</text>
</comment>
<comment type="subunit">
    <text evidence="1">Homodimer.</text>
</comment>
<comment type="similarity">
    <text evidence="1">Belongs to the purine/pyrimidine phosphoribosyltransferase family. PyrE subfamily.</text>
</comment>
<accession>A7HZX7</accession>
<name>PYRE_CAMHC</name>
<organism>
    <name type="scientific">Campylobacter hominis (strain ATCC BAA-381 / DSM 21671 / CCUG 45161 / LMG 19568 / NCTC 13146 / CH001A)</name>
    <dbReference type="NCBI Taxonomy" id="360107"/>
    <lineage>
        <taxon>Bacteria</taxon>
        <taxon>Pseudomonadati</taxon>
        <taxon>Campylobacterota</taxon>
        <taxon>Epsilonproteobacteria</taxon>
        <taxon>Campylobacterales</taxon>
        <taxon>Campylobacteraceae</taxon>
        <taxon>Campylobacter</taxon>
    </lineage>
</organism>
<feature type="chain" id="PRO_1000138769" description="Orotate phosphoribosyltransferase">
    <location>
        <begin position="1"/>
        <end position="202"/>
    </location>
</feature>
<feature type="binding site" evidence="1">
    <location>
        <position position="93"/>
    </location>
    <ligand>
        <name>5-phospho-alpha-D-ribose 1-diphosphate</name>
        <dbReference type="ChEBI" id="CHEBI:58017"/>
        <note>ligand shared between dimeric partners</note>
    </ligand>
</feature>
<feature type="binding site" description="in other chain" evidence="1">
    <location>
        <begin position="113"/>
        <end position="121"/>
    </location>
    <ligand>
        <name>5-phospho-alpha-D-ribose 1-diphosphate</name>
        <dbReference type="ChEBI" id="CHEBI:58017"/>
        <note>ligand shared between dimeric partners</note>
    </ligand>
</feature>
<feature type="binding site" evidence="1">
    <location>
        <position position="117"/>
    </location>
    <ligand>
        <name>orotate</name>
        <dbReference type="ChEBI" id="CHEBI:30839"/>
    </ligand>
</feature>
<feature type="binding site" evidence="1">
    <location>
        <position position="145"/>
    </location>
    <ligand>
        <name>orotate</name>
        <dbReference type="ChEBI" id="CHEBI:30839"/>
    </ligand>
</feature>
<evidence type="ECO:0000255" key="1">
    <source>
        <dbReference type="HAMAP-Rule" id="MF_01208"/>
    </source>
</evidence>
<keyword id="KW-0328">Glycosyltransferase</keyword>
<keyword id="KW-0460">Magnesium</keyword>
<keyword id="KW-0665">Pyrimidine biosynthesis</keyword>
<keyword id="KW-1185">Reference proteome</keyword>
<keyword id="KW-0808">Transferase</keyword>
<dbReference type="EC" id="2.4.2.10" evidence="1"/>
<dbReference type="EMBL" id="CP000776">
    <property type="protein sequence ID" value="ABS51386.1"/>
    <property type="molecule type" value="Genomic_DNA"/>
</dbReference>
<dbReference type="RefSeq" id="WP_012108099.1">
    <property type="nucleotide sequence ID" value="NC_009714.1"/>
</dbReference>
<dbReference type="SMR" id="A7HZX7"/>
<dbReference type="STRING" id="360107.CHAB381_0211"/>
<dbReference type="KEGG" id="cha:CHAB381_0211"/>
<dbReference type="eggNOG" id="COG0461">
    <property type="taxonomic scope" value="Bacteria"/>
</dbReference>
<dbReference type="HOGENOM" id="CLU_074878_3_0_7"/>
<dbReference type="OrthoDB" id="9783570at2"/>
<dbReference type="UniPathway" id="UPA00070">
    <property type="reaction ID" value="UER00119"/>
</dbReference>
<dbReference type="Proteomes" id="UP000002407">
    <property type="component" value="Chromosome"/>
</dbReference>
<dbReference type="GO" id="GO:0000287">
    <property type="term" value="F:magnesium ion binding"/>
    <property type="evidence" value="ECO:0007669"/>
    <property type="project" value="UniProtKB-UniRule"/>
</dbReference>
<dbReference type="GO" id="GO:0004588">
    <property type="term" value="F:orotate phosphoribosyltransferase activity"/>
    <property type="evidence" value="ECO:0007669"/>
    <property type="project" value="UniProtKB-UniRule"/>
</dbReference>
<dbReference type="GO" id="GO:0044205">
    <property type="term" value="P:'de novo' UMP biosynthetic process"/>
    <property type="evidence" value="ECO:0007669"/>
    <property type="project" value="UniProtKB-UniRule"/>
</dbReference>
<dbReference type="GO" id="GO:0019856">
    <property type="term" value="P:pyrimidine nucleobase biosynthetic process"/>
    <property type="evidence" value="ECO:0007669"/>
    <property type="project" value="InterPro"/>
</dbReference>
<dbReference type="CDD" id="cd06223">
    <property type="entry name" value="PRTases_typeI"/>
    <property type="match status" value="1"/>
</dbReference>
<dbReference type="Gene3D" id="3.40.50.2020">
    <property type="match status" value="1"/>
</dbReference>
<dbReference type="HAMAP" id="MF_01208">
    <property type="entry name" value="PyrE"/>
    <property type="match status" value="1"/>
</dbReference>
<dbReference type="InterPro" id="IPR023031">
    <property type="entry name" value="OPRT"/>
</dbReference>
<dbReference type="InterPro" id="IPR006273">
    <property type="entry name" value="Orotate_PRibTrfase_bac"/>
</dbReference>
<dbReference type="InterPro" id="IPR000836">
    <property type="entry name" value="PRibTrfase_dom"/>
</dbReference>
<dbReference type="InterPro" id="IPR029057">
    <property type="entry name" value="PRTase-like"/>
</dbReference>
<dbReference type="NCBIfam" id="TIGR01367">
    <property type="entry name" value="pyrE_Therm"/>
    <property type="match status" value="1"/>
</dbReference>
<dbReference type="PANTHER" id="PTHR19278">
    <property type="entry name" value="OROTATE PHOSPHORIBOSYLTRANSFERASE"/>
    <property type="match status" value="1"/>
</dbReference>
<dbReference type="PANTHER" id="PTHR19278:SF9">
    <property type="entry name" value="URIDINE 5'-MONOPHOSPHATE SYNTHASE"/>
    <property type="match status" value="1"/>
</dbReference>
<dbReference type="Pfam" id="PF00156">
    <property type="entry name" value="Pribosyltran"/>
    <property type="match status" value="1"/>
</dbReference>
<dbReference type="SUPFAM" id="SSF53271">
    <property type="entry name" value="PRTase-like"/>
    <property type="match status" value="1"/>
</dbReference>
<dbReference type="PROSITE" id="PS00103">
    <property type="entry name" value="PUR_PYR_PR_TRANSFER"/>
    <property type="match status" value="1"/>
</dbReference>
<protein>
    <recommendedName>
        <fullName evidence="1">Orotate phosphoribosyltransferase</fullName>
        <shortName evidence="1">OPRT</shortName>
        <shortName evidence="1">OPRTase</shortName>
        <ecNumber evidence="1">2.4.2.10</ecNumber>
    </recommendedName>
</protein>
<sequence>MDIEKIYKEHGAFLEGHFLLSSGNHSQFYLQSAKILEFPWIAGELANELFNVIKNAGIEFDSVCSPALGGILAGYELAKSAHKRFIFTERVDKKMTLRRGFSVSKGEKFIVCEDIITTGGSALESAKIIESLGGEVVAFAALANRGFCAVQNLGNERKESCKLPFNKPLFTLGNFEFDIYEPENCPLCKTGSVAIKPGSRGN</sequence>